<comment type="function">
    <text evidence="1">Probably participates in a plant defense mechanism.</text>
</comment>
<comment type="tissue specificity">
    <text evidence="2">Expressed in fruit, pedicel, root and stem but not in leaf (at protein level).</text>
</comment>
<comment type="domain">
    <text evidence="4">The presence of a 'disulfide through disulfide knot' structurally defines this protein as a knottin.</text>
</comment>
<comment type="PTM">
    <text evidence="1 2">This is a cyclic peptide.</text>
</comment>
<comment type="mass spectrometry"/>
<comment type="similarity">
    <text evidence="1">Belongs to the cyclotide family. Bracelet subfamily.</text>
</comment>
<comment type="caution">
    <text evidence="4">This peptide is cyclic. The start position was chosen by similarity to chassatide C8 for which the DNA sequence is known.</text>
</comment>
<organism evidence="3">
    <name type="scientific">Chassalia chartacea</name>
    <name type="common">Chassalia curviflora</name>
    <dbReference type="NCBI Taxonomy" id="510798"/>
    <lineage>
        <taxon>Eukaryota</taxon>
        <taxon>Viridiplantae</taxon>
        <taxon>Streptophyta</taxon>
        <taxon>Embryophyta</taxon>
        <taxon>Tracheophyta</taxon>
        <taxon>Spermatophyta</taxon>
        <taxon>Magnoliopsida</taxon>
        <taxon>eudicotyledons</taxon>
        <taxon>Gunneridae</taxon>
        <taxon>Pentapetalae</taxon>
        <taxon>asterids</taxon>
        <taxon>lamiids</taxon>
        <taxon>Gentianales</taxon>
        <taxon>Rubiaceae</taxon>
        <taxon>Rubioideae</taxon>
        <taxon>Palicoureeae</taxon>
        <taxon>Chassalia</taxon>
    </lineage>
</organism>
<sequence>GVIPCGESCVFIPCISSVIGCSCKNKVCYRN</sequence>
<reference evidence="4" key="1">
    <citation type="journal article" date="2012" name="J. Biol. Chem.">
        <title>Novel Cyclotides and Uncyclotides with Highly Shortened Precursors from Chassalia chartacea and Effects of Methionine Oxidation on Bioactivities.</title>
        <authorList>
            <person name="Nguyen G.K."/>
            <person name="Lim W.H."/>
            <person name="Nguyen P.Q."/>
            <person name="Tam J.P."/>
        </authorList>
    </citation>
    <scope>PROTEIN SEQUENCE</scope>
    <scope>TISSUE SPECIFICITY</scope>
    <scope>MASS SPECTROMETRY</scope>
    <scope>IDENTIFICATION BY MASS SPECTROMETRY</scope>
</reference>
<protein>
    <recommendedName>
        <fullName evidence="3">Chassatide C6</fullName>
    </recommendedName>
    <alternativeName>
        <fullName evidence="3">Cyclotide chaC6</fullName>
    </alternativeName>
</protein>
<keyword id="KW-0903">Direct protein sequencing</keyword>
<keyword id="KW-1015">Disulfide bond</keyword>
<keyword id="KW-0960">Knottin</keyword>
<keyword id="KW-0611">Plant defense</keyword>
<name>CYC6_CHACT</name>
<accession>C0HKH1</accession>
<proteinExistence type="evidence at protein level"/>
<feature type="peptide" id="PRO_0000440228" description="Chassatide C6" evidence="2">
    <location>
        <begin position="1"/>
        <end position="31"/>
    </location>
</feature>
<feature type="disulfide bond" evidence="1">
    <location>
        <begin position="5"/>
        <end position="21"/>
    </location>
</feature>
<feature type="disulfide bond" evidence="1">
    <location>
        <begin position="9"/>
        <end position="23"/>
    </location>
</feature>
<feature type="disulfide bond" evidence="1">
    <location>
        <begin position="14"/>
        <end position="28"/>
    </location>
</feature>
<feature type="cross-link" description="Cyclopeptide (Gly-Asn)" evidence="2">
    <location>
        <begin position="1"/>
        <end position="31"/>
    </location>
</feature>
<dbReference type="SMR" id="C0HKH1"/>
<dbReference type="GO" id="GO:0006952">
    <property type="term" value="P:defense response"/>
    <property type="evidence" value="ECO:0007669"/>
    <property type="project" value="UniProtKB-KW"/>
</dbReference>
<dbReference type="InterPro" id="IPR005535">
    <property type="entry name" value="Cyclotide"/>
</dbReference>
<dbReference type="InterPro" id="IPR012323">
    <property type="entry name" value="Cyclotide_bracelet_CS"/>
</dbReference>
<dbReference type="InterPro" id="IPR036146">
    <property type="entry name" value="Cyclotide_sf"/>
</dbReference>
<dbReference type="Pfam" id="PF03784">
    <property type="entry name" value="Cyclotide"/>
    <property type="match status" value="1"/>
</dbReference>
<dbReference type="PIRSF" id="PIRSF037891">
    <property type="entry name" value="Cycloviolacin"/>
    <property type="match status" value="1"/>
</dbReference>
<dbReference type="SUPFAM" id="SSF57038">
    <property type="entry name" value="Cyclotides"/>
    <property type="match status" value="1"/>
</dbReference>
<dbReference type="PROSITE" id="PS51052">
    <property type="entry name" value="CYCLOTIDE"/>
    <property type="match status" value="1"/>
</dbReference>
<dbReference type="PROSITE" id="PS60008">
    <property type="entry name" value="CYCLOTIDE_BRACELET"/>
    <property type="match status" value="1"/>
</dbReference>
<evidence type="ECO:0000255" key="1">
    <source>
        <dbReference type="PROSITE-ProRule" id="PRU00395"/>
    </source>
</evidence>
<evidence type="ECO:0000269" key="2">
    <source>
    </source>
</evidence>
<evidence type="ECO:0000303" key="3">
    <source>
    </source>
</evidence>
<evidence type="ECO:0000305" key="4"/>